<keyword id="KW-0903">Direct protein sequencing</keyword>
<keyword id="KW-0325">Glycoprotein</keyword>
<keyword id="KW-0336">GPI-anchor</keyword>
<keyword id="KW-0379">Hydroxylation</keyword>
<keyword id="KW-0449">Lipoprotein</keyword>
<keyword id="KW-0472">Membrane</keyword>
<keyword id="KW-0654">Proteoglycan</keyword>
<keyword id="KW-1185">Reference proteome</keyword>
<keyword id="KW-0732">Signal</keyword>
<keyword id="KW-0926">Vacuole</keyword>
<sequence length="68" mass="6144">MAGQLKSKIVAVAVAAVVVVASSLVGTASAADAPAPAPTSGATATAAAAPAFAAVSVAAAALGGYLFC</sequence>
<protein>
    <recommendedName>
        <fullName>Arabinogalactan peptide 1</fullName>
        <shortName>OsAGPEP1</shortName>
    </recommendedName>
</protein>
<dbReference type="EMBL" id="EU282462">
    <property type="protein sequence ID" value="ABX83034.1"/>
    <property type="molecule type" value="Genomic_DNA"/>
</dbReference>
<dbReference type="EMBL" id="AP003224">
    <property type="protein sequence ID" value="BAD52838.1"/>
    <property type="status" value="ALT_SEQ"/>
    <property type="molecule type" value="Genomic_DNA"/>
</dbReference>
<dbReference type="EMBL" id="AP008207">
    <property type="protein sequence ID" value="BAH91319.1"/>
    <property type="molecule type" value="Genomic_DNA"/>
</dbReference>
<dbReference type="EMBL" id="AP014957">
    <property type="status" value="NOT_ANNOTATED_CDS"/>
    <property type="molecule type" value="Genomic_DNA"/>
</dbReference>
<dbReference type="EMBL" id="CM000138">
    <property type="protein sequence ID" value="EEE55483.1"/>
    <property type="molecule type" value="Genomic_DNA"/>
</dbReference>
<dbReference type="STRING" id="39947.A9UGV5"/>
<dbReference type="PaxDb" id="39947-A9UGV5"/>
<dbReference type="KEGG" id="dosa:Os01g0778400"/>
<dbReference type="HOGENOM" id="CLU_183441_0_0_1"/>
<dbReference type="InParanoid" id="A9UGV5"/>
<dbReference type="Proteomes" id="UP000000763">
    <property type="component" value="Chromosome 1"/>
</dbReference>
<dbReference type="Proteomes" id="UP000007752">
    <property type="component" value="Chromosome 1"/>
</dbReference>
<dbReference type="Proteomes" id="UP000059680">
    <property type="component" value="Chromosome 1"/>
</dbReference>
<dbReference type="GO" id="GO:0032578">
    <property type="term" value="C:aleurone grain membrane"/>
    <property type="evidence" value="ECO:0000314"/>
    <property type="project" value="UniProtKB"/>
</dbReference>
<dbReference type="GO" id="GO:0098552">
    <property type="term" value="C:side of membrane"/>
    <property type="evidence" value="ECO:0007669"/>
    <property type="project" value="UniProtKB-KW"/>
</dbReference>
<dbReference type="GO" id="GO:0005773">
    <property type="term" value="C:vacuole"/>
    <property type="evidence" value="ECO:0007669"/>
    <property type="project" value="UniProtKB-KW"/>
</dbReference>
<dbReference type="InterPro" id="IPR039281">
    <property type="entry name" value="AGP3/12/13/14/21"/>
</dbReference>
<dbReference type="PANTHER" id="PTHR34114">
    <property type="entry name" value="ARABINOGALACTAN PEPTIDE 1"/>
    <property type="match status" value="1"/>
</dbReference>
<dbReference type="PANTHER" id="PTHR34114:SF11">
    <property type="entry name" value="ARABINOGALACTAN PROTEIN 13-RELATED"/>
    <property type="match status" value="1"/>
</dbReference>
<feature type="signal peptide" evidence="3">
    <location>
        <begin position="1"/>
        <end position="30"/>
    </location>
</feature>
<feature type="chain" id="PRO_0000397890" description="Arabinogalactan peptide 1">
    <location>
        <begin position="31"/>
        <end position="40"/>
    </location>
</feature>
<feature type="propeptide" id="PRO_0000397891" description="Removed in mature form" evidence="2">
    <location>
        <begin position="41"/>
        <end position="68"/>
    </location>
</feature>
<feature type="lipid moiety-binding region" description="GPI-anchor amidated serine" evidence="2">
    <location>
        <position position="40"/>
    </location>
</feature>
<gene>
    <name type="primary">AGPEP1</name>
    <name type="ordered locus">Os01g0778400</name>
    <name type="ordered locus">LOC_Os01g57040</name>
    <name type="ORF">OsJ_03666</name>
    <name type="ORF">P0010B10.2</name>
</gene>
<name>APEP1_ORYSJ</name>
<evidence type="ECO:0000250" key="1"/>
<evidence type="ECO:0000255" key="2"/>
<evidence type="ECO:0000269" key="3">
    <source>
    </source>
</evidence>
<evidence type="ECO:0000305" key="4"/>
<organism>
    <name type="scientific">Oryza sativa subsp. japonica</name>
    <name type="common">Rice</name>
    <dbReference type="NCBI Taxonomy" id="39947"/>
    <lineage>
        <taxon>Eukaryota</taxon>
        <taxon>Viridiplantae</taxon>
        <taxon>Streptophyta</taxon>
        <taxon>Embryophyta</taxon>
        <taxon>Tracheophyta</taxon>
        <taxon>Spermatophyta</taxon>
        <taxon>Magnoliopsida</taxon>
        <taxon>Liliopsida</taxon>
        <taxon>Poales</taxon>
        <taxon>Poaceae</taxon>
        <taxon>BOP clade</taxon>
        <taxon>Oryzoideae</taxon>
        <taxon>Oryzeae</taxon>
        <taxon>Oryzinae</taxon>
        <taxon>Oryza</taxon>
        <taxon>Oryza sativa</taxon>
    </lineage>
</organism>
<reference key="1">
    <citation type="journal article" date="2004" name="Plant Cell Physiol.">
        <title>Isolation and identification of glycosylphosphatidylinositol-anchored arabinogalactan proteins and novel beta-glucosyl Yariv-reactive proteins from seeds of rice (Oryza sativa).</title>
        <authorList>
            <person name="Mashiguchi K."/>
            <person name="Yamaguchi I."/>
            <person name="Suzuki Y."/>
        </authorList>
    </citation>
    <scope>NUCLEOTIDE SEQUENCE [GENOMIC DNA]</scope>
    <scope>PROTEIN SEQUENCE OF 31-40</scope>
    <scope>TISSUE SPECIFICITY</scope>
    <scope>GLYCOSYLATION</scope>
    <source>
        <strain>cv. Koshihikari</strain>
        <tissue>Aleurone</tissue>
    </source>
</reference>
<reference key="2">
    <citation type="journal article" date="2002" name="Nature">
        <title>The genome sequence and structure of rice chromosome 1.</title>
        <authorList>
            <person name="Sasaki T."/>
            <person name="Matsumoto T."/>
            <person name="Yamamoto K."/>
            <person name="Sakata K."/>
            <person name="Baba T."/>
            <person name="Katayose Y."/>
            <person name="Wu J."/>
            <person name="Niimura Y."/>
            <person name="Cheng Z."/>
            <person name="Nagamura Y."/>
            <person name="Antonio B.A."/>
            <person name="Kanamori H."/>
            <person name="Hosokawa S."/>
            <person name="Masukawa M."/>
            <person name="Arikawa K."/>
            <person name="Chiden Y."/>
            <person name="Hayashi M."/>
            <person name="Okamoto M."/>
            <person name="Ando T."/>
            <person name="Aoki H."/>
            <person name="Arita K."/>
            <person name="Hamada M."/>
            <person name="Harada C."/>
            <person name="Hijishita S."/>
            <person name="Honda M."/>
            <person name="Ichikawa Y."/>
            <person name="Idonuma A."/>
            <person name="Iijima M."/>
            <person name="Ikeda M."/>
            <person name="Ikeno M."/>
            <person name="Ito S."/>
            <person name="Ito T."/>
            <person name="Ito Y."/>
            <person name="Ito Y."/>
            <person name="Iwabuchi A."/>
            <person name="Kamiya K."/>
            <person name="Karasawa W."/>
            <person name="Katagiri S."/>
            <person name="Kikuta A."/>
            <person name="Kobayashi N."/>
            <person name="Kono I."/>
            <person name="Machita K."/>
            <person name="Maehara T."/>
            <person name="Mizuno H."/>
            <person name="Mizubayashi T."/>
            <person name="Mukai Y."/>
            <person name="Nagasaki H."/>
            <person name="Nakashima M."/>
            <person name="Nakama Y."/>
            <person name="Nakamichi Y."/>
            <person name="Nakamura M."/>
            <person name="Namiki N."/>
            <person name="Negishi M."/>
            <person name="Ohta I."/>
            <person name="Ono N."/>
            <person name="Saji S."/>
            <person name="Sakai K."/>
            <person name="Shibata M."/>
            <person name="Shimokawa T."/>
            <person name="Shomura A."/>
            <person name="Song J."/>
            <person name="Takazaki Y."/>
            <person name="Terasawa K."/>
            <person name="Tsuji K."/>
            <person name="Waki K."/>
            <person name="Yamagata H."/>
            <person name="Yamane H."/>
            <person name="Yoshiki S."/>
            <person name="Yoshihara R."/>
            <person name="Yukawa K."/>
            <person name="Zhong H."/>
            <person name="Iwama H."/>
            <person name="Endo T."/>
            <person name="Ito H."/>
            <person name="Hahn J.H."/>
            <person name="Kim H.-I."/>
            <person name="Eun M.-Y."/>
            <person name="Yano M."/>
            <person name="Jiang J."/>
            <person name="Gojobori T."/>
        </authorList>
    </citation>
    <scope>NUCLEOTIDE SEQUENCE [LARGE SCALE GENOMIC DNA]</scope>
    <source>
        <strain>cv. Nipponbare</strain>
    </source>
</reference>
<reference key="3">
    <citation type="journal article" date="2005" name="Nature">
        <title>The map-based sequence of the rice genome.</title>
        <authorList>
            <consortium name="International rice genome sequencing project (IRGSP)"/>
        </authorList>
    </citation>
    <scope>NUCLEOTIDE SEQUENCE [LARGE SCALE GENOMIC DNA]</scope>
    <source>
        <strain>cv. Nipponbare</strain>
    </source>
</reference>
<reference key="4">
    <citation type="journal article" date="2008" name="Nucleic Acids Res.">
        <title>The rice annotation project database (RAP-DB): 2008 update.</title>
        <authorList>
            <consortium name="The rice annotation project (RAP)"/>
        </authorList>
    </citation>
    <scope>GENOME REANNOTATION</scope>
    <source>
        <strain>cv. Nipponbare</strain>
    </source>
</reference>
<reference key="5">
    <citation type="journal article" date="2013" name="Rice">
        <title>Improvement of the Oryza sativa Nipponbare reference genome using next generation sequence and optical map data.</title>
        <authorList>
            <person name="Kawahara Y."/>
            <person name="de la Bastide M."/>
            <person name="Hamilton J.P."/>
            <person name="Kanamori H."/>
            <person name="McCombie W.R."/>
            <person name="Ouyang S."/>
            <person name="Schwartz D.C."/>
            <person name="Tanaka T."/>
            <person name="Wu J."/>
            <person name="Zhou S."/>
            <person name="Childs K.L."/>
            <person name="Davidson R.M."/>
            <person name="Lin H."/>
            <person name="Quesada-Ocampo L."/>
            <person name="Vaillancourt B."/>
            <person name="Sakai H."/>
            <person name="Lee S.S."/>
            <person name="Kim J."/>
            <person name="Numa H."/>
            <person name="Itoh T."/>
            <person name="Buell C.R."/>
            <person name="Matsumoto T."/>
        </authorList>
    </citation>
    <scope>GENOME REANNOTATION</scope>
    <source>
        <strain>cv. Nipponbare</strain>
    </source>
</reference>
<reference key="6">
    <citation type="journal article" date="2005" name="PLoS Biol.">
        <title>The genomes of Oryza sativa: a history of duplications.</title>
        <authorList>
            <person name="Yu J."/>
            <person name="Wang J."/>
            <person name="Lin W."/>
            <person name="Li S."/>
            <person name="Li H."/>
            <person name="Zhou J."/>
            <person name="Ni P."/>
            <person name="Dong W."/>
            <person name="Hu S."/>
            <person name="Zeng C."/>
            <person name="Zhang J."/>
            <person name="Zhang Y."/>
            <person name="Li R."/>
            <person name="Xu Z."/>
            <person name="Li S."/>
            <person name="Li X."/>
            <person name="Zheng H."/>
            <person name="Cong L."/>
            <person name="Lin L."/>
            <person name="Yin J."/>
            <person name="Geng J."/>
            <person name="Li G."/>
            <person name="Shi J."/>
            <person name="Liu J."/>
            <person name="Lv H."/>
            <person name="Li J."/>
            <person name="Wang J."/>
            <person name="Deng Y."/>
            <person name="Ran L."/>
            <person name="Shi X."/>
            <person name="Wang X."/>
            <person name="Wu Q."/>
            <person name="Li C."/>
            <person name="Ren X."/>
            <person name="Wang J."/>
            <person name="Wang X."/>
            <person name="Li D."/>
            <person name="Liu D."/>
            <person name="Zhang X."/>
            <person name="Ji Z."/>
            <person name="Zhao W."/>
            <person name="Sun Y."/>
            <person name="Zhang Z."/>
            <person name="Bao J."/>
            <person name="Han Y."/>
            <person name="Dong L."/>
            <person name="Ji J."/>
            <person name="Chen P."/>
            <person name="Wu S."/>
            <person name="Liu J."/>
            <person name="Xiao Y."/>
            <person name="Bu D."/>
            <person name="Tan J."/>
            <person name="Yang L."/>
            <person name="Ye C."/>
            <person name="Zhang J."/>
            <person name="Xu J."/>
            <person name="Zhou Y."/>
            <person name="Yu Y."/>
            <person name="Zhang B."/>
            <person name="Zhuang S."/>
            <person name="Wei H."/>
            <person name="Liu B."/>
            <person name="Lei M."/>
            <person name="Yu H."/>
            <person name="Li Y."/>
            <person name="Xu H."/>
            <person name="Wei S."/>
            <person name="He X."/>
            <person name="Fang L."/>
            <person name="Zhang Z."/>
            <person name="Zhang Y."/>
            <person name="Huang X."/>
            <person name="Su Z."/>
            <person name="Tong W."/>
            <person name="Li J."/>
            <person name="Tong Z."/>
            <person name="Li S."/>
            <person name="Ye J."/>
            <person name="Wang L."/>
            <person name="Fang L."/>
            <person name="Lei T."/>
            <person name="Chen C.-S."/>
            <person name="Chen H.-C."/>
            <person name="Xu Z."/>
            <person name="Li H."/>
            <person name="Huang H."/>
            <person name="Zhang F."/>
            <person name="Xu H."/>
            <person name="Li N."/>
            <person name="Zhao C."/>
            <person name="Li S."/>
            <person name="Dong L."/>
            <person name="Huang Y."/>
            <person name="Li L."/>
            <person name="Xi Y."/>
            <person name="Qi Q."/>
            <person name="Li W."/>
            <person name="Zhang B."/>
            <person name="Hu W."/>
            <person name="Zhang Y."/>
            <person name="Tian X."/>
            <person name="Jiao Y."/>
            <person name="Liang X."/>
            <person name="Jin J."/>
            <person name="Gao L."/>
            <person name="Zheng W."/>
            <person name="Hao B."/>
            <person name="Liu S.-M."/>
            <person name="Wang W."/>
            <person name="Yuan L."/>
            <person name="Cao M."/>
            <person name="McDermott J."/>
            <person name="Samudrala R."/>
            <person name="Wang J."/>
            <person name="Wong G.K.-S."/>
            <person name="Yang H."/>
        </authorList>
    </citation>
    <scope>NUCLEOTIDE SEQUENCE [LARGE SCALE GENOMIC DNA]</scope>
    <source>
        <strain>cv. Nipponbare</strain>
    </source>
</reference>
<accession>A9UGV5</accession>
<accession>Q5ZCF5</accession>
<proteinExistence type="evidence at protein level"/>
<comment type="function">
    <text evidence="1">Proteoglycan that seems to be implicated in diverse developmental roles such as differentiation, cell-cell recognition, embryogenesis and programmed cell death.</text>
</comment>
<comment type="subcellular location">
    <subcellularLocation>
        <location evidence="4">Vacuole</location>
        <location evidence="4">Aleurone grain membrane</location>
        <topology evidence="4">Lipid-anchor</topology>
        <topology evidence="4">GPI-anchor</topology>
    </subcellularLocation>
</comment>
<comment type="tissue specificity">
    <text evidence="3">Expressed in roots, stems, flowers and seeds.</text>
</comment>
<comment type="PTM">
    <text evidence="3">O-glycosylated on hydroxyprolines; noncontiguous hydroxylproline residues are glycosylated with arabinogalactan.</text>
</comment>
<comment type="similarity">
    <text evidence="4">Belongs to the AG-peptide AGP family.</text>
</comment>
<comment type="sequence caution" evidence="4">
    <conflict type="erroneous gene model prediction">
        <sequence resource="EMBL-CDS" id="BAD52838"/>
    </conflict>
</comment>